<gene>
    <name evidence="1" type="primary">rplL</name>
    <name type="ordered locus">UU011</name>
</gene>
<reference key="1">
    <citation type="journal article" date="2000" name="Nature">
        <title>The complete sequence of the mucosal pathogen Ureaplasma urealyticum.</title>
        <authorList>
            <person name="Glass J.I."/>
            <person name="Lefkowitz E.J."/>
            <person name="Glass J.S."/>
            <person name="Heiner C.R."/>
            <person name="Chen E.Y."/>
            <person name="Cassell G.H."/>
        </authorList>
    </citation>
    <scope>NUCLEOTIDE SEQUENCE [LARGE SCALE GENOMIC DNA]</scope>
    <source>
        <strain>ATCC 700970</strain>
    </source>
</reference>
<comment type="function">
    <text evidence="1">Forms part of the ribosomal stalk which helps the ribosome interact with GTP-bound translation factors. Is thus essential for accurate translation.</text>
</comment>
<comment type="subunit">
    <text evidence="1">Homodimer. Part of the ribosomal stalk of the 50S ribosomal subunit. Forms a multimeric L10(L12)X complex, where L10 forms an elongated spine to which 2 to 4 L12 dimers bind in a sequential fashion. Binds GTP-bound translation factors.</text>
</comment>
<comment type="similarity">
    <text evidence="1">Belongs to the bacterial ribosomal protein bL12 family.</text>
</comment>
<accession>Q9PRD4</accession>
<feature type="chain" id="PRO_0000157600" description="Large ribosomal subunit protein bL12">
    <location>
        <begin position="1"/>
        <end position="121"/>
    </location>
</feature>
<evidence type="ECO:0000255" key="1">
    <source>
        <dbReference type="HAMAP-Rule" id="MF_00368"/>
    </source>
</evidence>
<evidence type="ECO:0000305" key="2"/>
<protein>
    <recommendedName>
        <fullName evidence="1">Large ribosomal subunit protein bL12</fullName>
    </recommendedName>
    <alternativeName>
        <fullName evidence="2">50S ribosomal protein L7/L12</fullName>
    </alternativeName>
</protein>
<keyword id="KW-1185">Reference proteome</keyword>
<keyword id="KW-0687">Ribonucleoprotein</keyword>
<keyword id="KW-0689">Ribosomal protein</keyword>
<sequence length="121" mass="12711">MSKLTIEQFIAAIKEMSMLELNDLVKAIETEFGVSAAAPVAAAAAPVAAEAPTEVTIKLVEAGTNKVGVIKLIREITGLGLMEAKTAAETAGSVIKEDVKTEEANEIKKKFDELGAKVQLV</sequence>
<name>RL7_UREPA</name>
<dbReference type="EMBL" id="AF222894">
    <property type="protein sequence ID" value="AAF30416.1"/>
    <property type="molecule type" value="Genomic_DNA"/>
</dbReference>
<dbReference type="RefSeq" id="WP_006688489.1">
    <property type="nucleotide sequence ID" value="NC_002162.1"/>
</dbReference>
<dbReference type="SMR" id="Q9PRD4"/>
<dbReference type="STRING" id="273119.UU011"/>
<dbReference type="EnsemblBacteria" id="AAF30416">
    <property type="protein sequence ID" value="AAF30416"/>
    <property type="gene ID" value="UU011"/>
</dbReference>
<dbReference type="GeneID" id="29672193"/>
<dbReference type="KEGG" id="uur:UU011"/>
<dbReference type="eggNOG" id="COG0222">
    <property type="taxonomic scope" value="Bacteria"/>
</dbReference>
<dbReference type="HOGENOM" id="CLU_086499_3_2_14"/>
<dbReference type="OrthoDB" id="9811748at2"/>
<dbReference type="Proteomes" id="UP000000423">
    <property type="component" value="Chromosome"/>
</dbReference>
<dbReference type="GO" id="GO:0022625">
    <property type="term" value="C:cytosolic large ribosomal subunit"/>
    <property type="evidence" value="ECO:0007669"/>
    <property type="project" value="TreeGrafter"/>
</dbReference>
<dbReference type="GO" id="GO:0003729">
    <property type="term" value="F:mRNA binding"/>
    <property type="evidence" value="ECO:0007669"/>
    <property type="project" value="TreeGrafter"/>
</dbReference>
<dbReference type="GO" id="GO:0003735">
    <property type="term" value="F:structural constituent of ribosome"/>
    <property type="evidence" value="ECO:0007669"/>
    <property type="project" value="InterPro"/>
</dbReference>
<dbReference type="GO" id="GO:0006412">
    <property type="term" value="P:translation"/>
    <property type="evidence" value="ECO:0007669"/>
    <property type="project" value="UniProtKB-UniRule"/>
</dbReference>
<dbReference type="CDD" id="cd00387">
    <property type="entry name" value="Ribosomal_L7_L12"/>
    <property type="match status" value="1"/>
</dbReference>
<dbReference type="FunFam" id="3.30.1390.10:FF:000001">
    <property type="entry name" value="50S ribosomal protein L7/L12"/>
    <property type="match status" value="1"/>
</dbReference>
<dbReference type="Gene3D" id="3.30.1390.10">
    <property type="match status" value="1"/>
</dbReference>
<dbReference type="Gene3D" id="1.20.5.710">
    <property type="entry name" value="Single helix bin"/>
    <property type="match status" value="1"/>
</dbReference>
<dbReference type="HAMAP" id="MF_00368">
    <property type="entry name" value="Ribosomal_bL12"/>
    <property type="match status" value="1"/>
</dbReference>
<dbReference type="InterPro" id="IPR000206">
    <property type="entry name" value="Ribosomal_bL12"/>
</dbReference>
<dbReference type="InterPro" id="IPR013823">
    <property type="entry name" value="Ribosomal_bL12_C"/>
</dbReference>
<dbReference type="InterPro" id="IPR014719">
    <property type="entry name" value="Ribosomal_bL12_C/ClpS-like"/>
</dbReference>
<dbReference type="InterPro" id="IPR008932">
    <property type="entry name" value="Ribosomal_bL12_oligo"/>
</dbReference>
<dbReference type="InterPro" id="IPR036235">
    <property type="entry name" value="Ribosomal_bL12_oligo_N_sf"/>
</dbReference>
<dbReference type="NCBIfam" id="TIGR00855">
    <property type="entry name" value="L12"/>
    <property type="match status" value="1"/>
</dbReference>
<dbReference type="PANTHER" id="PTHR45987">
    <property type="entry name" value="39S RIBOSOMAL PROTEIN L12"/>
    <property type="match status" value="1"/>
</dbReference>
<dbReference type="PANTHER" id="PTHR45987:SF4">
    <property type="entry name" value="LARGE RIBOSOMAL SUBUNIT PROTEIN BL12M"/>
    <property type="match status" value="1"/>
</dbReference>
<dbReference type="Pfam" id="PF00542">
    <property type="entry name" value="Ribosomal_L12"/>
    <property type="match status" value="1"/>
</dbReference>
<dbReference type="Pfam" id="PF16320">
    <property type="entry name" value="Ribosomal_L12_N"/>
    <property type="match status" value="1"/>
</dbReference>
<dbReference type="SUPFAM" id="SSF54736">
    <property type="entry name" value="ClpS-like"/>
    <property type="match status" value="1"/>
</dbReference>
<dbReference type="SUPFAM" id="SSF48300">
    <property type="entry name" value="Ribosomal protein L7/12, oligomerisation (N-terminal) domain"/>
    <property type="match status" value="1"/>
</dbReference>
<proteinExistence type="inferred from homology"/>
<organism>
    <name type="scientific">Ureaplasma parvum serovar 3 (strain ATCC 700970)</name>
    <dbReference type="NCBI Taxonomy" id="273119"/>
    <lineage>
        <taxon>Bacteria</taxon>
        <taxon>Bacillati</taxon>
        <taxon>Mycoplasmatota</taxon>
        <taxon>Mycoplasmoidales</taxon>
        <taxon>Mycoplasmoidaceae</taxon>
        <taxon>Ureaplasma</taxon>
    </lineage>
</organism>